<feature type="chain" id="PRO_1000139879" description="Glycogen debranching enzyme">
    <location>
        <begin position="1"/>
        <end position="658"/>
    </location>
</feature>
<feature type="region of interest" description="Disordered" evidence="2">
    <location>
        <begin position="459"/>
        <end position="483"/>
    </location>
</feature>
<feature type="active site" description="Nucleophile" evidence="1">
    <location>
        <position position="336"/>
    </location>
</feature>
<feature type="active site" description="Proton donor" evidence="1">
    <location>
        <position position="371"/>
    </location>
</feature>
<feature type="site" description="Transition state stabilizer" evidence="1">
    <location>
        <position position="443"/>
    </location>
</feature>
<name>GLGX_SALSV</name>
<accession>B4TY88</accession>
<proteinExistence type="inferred from homology"/>
<evidence type="ECO:0000255" key="1">
    <source>
        <dbReference type="HAMAP-Rule" id="MF_01248"/>
    </source>
</evidence>
<evidence type="ECO:0000256" key="2">
    <source>
        <dbReference type="SAM" id="MobiDB-lite"/>
    </source>
</evidence>
<organism>
    <name type="scientific">Salmonella schwarzengrund (strain CVM19633)</name>
    <dbReference type="NCBI Taxonomy" id="439843"/>
    <lineage>
        <taxon>Bacteria</taxon>
        <taxon>Pseudomonadati</taxon>
        <taxon>Pseudomonadota</taxon>
        <taxon>Gammaproteobacteria</taxon>
        <taxon>Enterobacterales</taxon>
        <taxon>Enterobacteriaceae</taxon>
        <taxon>Salmonella</taxon>
    </lineage>
</organism>
<keyword id="KW-0119">Carbohydrate metabolism</keyword>
<keyword id="KW-0321">Glycogen metabolism</keyword>
<keyword id="KW-0326">Glycosidase</keyword>
<keyword id="KW-0378">Hydrolase</keyword>
<protein>
    <recommendedName>
        <fullName evidence="1">Glycogen debranching enzyme</fullName>
        <ecNumber evidence="1">3.2.1.196</ecNumber>
    </recommendedName>
    <alternativeName>
        <fullName evidence="1">Limit dextrin alpha-1,6-maltotetraose-hydrolase</fullName>
    </alternativeName>
</protein>
<reference key="1">
    <citation type="journal article" date="2011" name="J. Bacteriol.">
        <title>Comparative genomics of 28 Salmonella enterica isolates: evidence for CRISPR-mediated adaptive sublineage evolution.</title>
        <authorList>
            <person name="Fricke W.F."/>
            <person name="Mammel M.K."/>
            <person name="McDermott P.F."/>
            <person name="Tartera C."/>
            <person name="White D.G."/>
            <person name="Leclerc J.E."/>
            <person name="Ravel J."/>
            <person name="Cebula T.A."/>
        </authorList>
    </citation>
    <scope>NUCLEOTIDE SEQUENCE [LARGE SCALE GENOMIC DNA]</scope>
    <source>
        <strain>CVM19633</strain>
    </source>
</reference>
<dbReference type="EC" id="3.2.1.196" evidence="1"/>
<dbReference type="EMBL" id="CP001127">
    <property type="protein sequence ID" value="ACF91306.1"/>
    <property type="molecule type" value="Genomic_DNA"/>
</dbReference>
<dbReference type="RefSeq" id="WP_000192478.1">
    <property type="nucleotide sequence ID" value="NC_011094.1"/>
</dbReference>
<dbReference type="SMR" id="B4TY88"/>
<dbReference type="CAZy" id="CBM48">
    <property type="family name" value="Carbohydrate-Binding Module Family 48"/>
</dbReference>
<dbReference type="CAZy" id="GH13">
    <property type="family name" value="Glycoside Hydrolase Family 13"/>
</dbReference>
<dbReference type="KEGG" id="sew:SeSA_A3727"/>
<dbReference type="HOGENOM" id="CLU_011725_1_1_6"/>
<dbReference type="UniPathway" id="UPA00165"/>
<dbReference type="Proteomes" id="UP000001865">
    <property type="component" value="Chromosome"/>
</dbReference>
<dbReference type="GO" id="GO:0004133">
    <property type="term" value="F:glycogen debranching enzyme activity"/>
    <property type="evidence" value="ECO:0007669"/>
    <property type="project" value="UniProtKB-UniRule"/>
</dbReference>
<dbReference type="GO" id="GO:0004553">
    <property type="term" value="F:hydrolase activity, hydrolyzing O-glycosyl compounds"/>
    <property type="evidence" value="ECO:0007669"/>
    <property type="project" value="InterPro"/>
</dbReference>
<dbReference type="GO" id="GO:0005980">
    <property type="term" value="P:glycogen catabolic process"/>
    <property type="evidence" value="ECO:0007669"/>
    <property type="project" value="UniProtKB-UniRule"/>
</dbReference>
<dbReference type="CDD" id="cd11326">
    <property type="entry name" value="AmyAc_Glg_debranch"/>
    <property type="match status" value="1"/>
</dbReference>
<dbReference type="CDD" id="cd02856">
    <property type="entry name" value="E_set_GDE_Isoamylase_N"/>
    <property type="match status" value="1"/>
</dbReference>
<dbReference type="FunFam" id="2.60.40.10:FF:000468">
    <property type="entry name" value="Glycogen debranching enzyme"/>
    <property type="match status" value="1"/>
</dbReference>
<dbReference type="Gene3D" id="3.20.20.80">
    <property type="entry name" value="Glycosidases"/>
    <property type="match status" value="1"/>
</dbReference>
<dbReference type="Gene3D" id="2.60.40.1180">
    <property type="entry name" value="Golgi alpha-mannosidase II"/>
    <property type="match status" value="1"/>
</dbReference>
<dbReference type="Gene3D" id="2.60.40.10">
    <property type="entry name" value="Immunoglobulins"/>
    <property type="match status" value="1"/>
</dbReference>
<dbReference type="HAMAP" id="MF_01248">
    <property type="entry name" value="GlgX"/>
    <property type="match status" value="1"/>
</dbReference>
<dbReference type="InterPro" id="IPR040784">
    <property type="entry name" value="GlgX_C"/>
</dbReference>
<dbReference type="InterPro" id="IPR044505">
    <property type="entry name" value="GlgX_Isoamylase_N_E_set"/>
</dbReference>
<dbReference type="InterPro" id="IPR006047">
    <property type="entry name" value="Glyco_hydro_13_cat_dom"/>
</dbReference>
<dbReference type="InterPro" id="IPR004193">
    <property type="entry name" value="Glyco_hydro_13_N"/>
</dbReference>
<dbReference type="InterPro" id="IPR013780">
    <property type="entry name" value="Glyco_hydro_b"/>
</dbReference>
<dbReference type="InterPro" id="IPR022844">
    <property type="entry name" value="Glycogen_debranch_bac"/>
</dbReference>
<dbReference type="InterPro" id="IPR011837">
    <property type="entry name" value="Glycogen_debranch_GlgX"/>
</dbReference>
<dbReference type="InterPro" id="IPR017853">
    <property type="entry name" value="Glycoside_hydrolase_SF"/>
</dbReference>
<dbReference type="InterPro" id="IPR013783">
    <property type="entry name" value="Ig-like_fold"/>
</dbReference>
<dbReference type="InterPro" id="IPR014756">
    <property type="entry name" value="Ig_E-set"/>
</dbReference>
<dbReference type="NCBIfam" id="TIGR02100">
    <property type="entry name" value="glgX_debranch"/>
    <property type="match status" value="1"/>
</dbReference>
<dbReference type="NCBIfam" id="NF002983">
    <property type="entry name" value="PRK03705.1"/>
    <property type="match status" value="1"/>
</dbReference>
<dbReference type="PANTHER" id="PTHR43002">
    <property type="entry name" value="GLYCOGEN DEBRANCHING ENZYME"/>
    <property type="match status" value="1"/>
</dbReference>
<dbReference type="Pfam" id="PF00128">
    <property type="entry name" value="Alpha-amylase"/>
    <property type="match status" value="1"/>
</dbReference>
<dbReference type="Pfam" id="PF02922">
    <property type="entry name" value="CBM_48"/>
    <property type="match status" value="1"/>
</dbReference>
<dbReference type="Pfam" id="PF18390">
    <property type="entry name" value="GlgX_C"/>
    <property type="match status" value="1"/>
</dbReference>
<dbReference type="SMART" id="SM00642">
    <property type="entry name" value="Aamy"/>
    <property type="match status" value="1"/>
</dbReference>
<dbReference type="SUPFAM" id="SSF51445">
    <property type="entry name" value="(Trans)glycosidases"/>
    <property type="match status" value="1"/>
</dbReference>
<dbReference type="SUPFAM" id="SSF81296">
    <property type="entry name" value="E set domains"/>
    <property type="match status" value="1"/>
</dbReference>
<sequence length="658" mass="73656">MTQLAIGEATPHGATYDGHGVNFTLFSAHAERVELCVFDSRGNERRYDLPGRRGDVWHGYLAGARPGLRYGYRVHGPWQPAQGHRFNPAKLLLDPYARRVEGELKDHPLLHGGHDEPDYRDNAAVAPKSVIISDHYDWEDDAAPRTPWGKTVIYEAHVKGLTYLHPELPQEIRGTYKALGHPVMVAYFKQLGITALELLPVAQFASEPRLQRMGLTNYWGYNPMAMFALHPAWASSPETALDEFRDAVKALHRAGIEVILDIVLNHSAELDLDGPTFSLRGIDNRSYYWIRDDGDYHNWTGCGNTLNLSHPGVVEYACECLRYWVETCHVDGFRFDLASVMGRTPTFRQDAPLFAAIKACPVLSTVKLIAEPWDIGEGGYQVGNFPPPFAEWNDHFRDAARRFWLPRNLTTGEFACRFAASSDVFKRNGRTPGASVNLLTAHDGFTLRDCVCFNQKHNEANGEENRDGTNSNYSDNHGKEGLGGPLDLMERRRDSIHALLATLLLSQGTPMLLAGDEHGHSQHGNNNAYCQDNALTWLDWQQANRGLTTFTAALIRLRQQIPALTGNSWWEEGDGNVRWLNKNAQPLSADEWQNGPKLMQILLSDRFLIAINATLEVTDIVLPEGEWRAVPPFAGEDNPVITAVWQGPAHGLCVFQRG</sequence>
<comment type="function">
    <text evidence="1">Removes maltotriose and maltotetraose chains that are attached by 1,6-alpha-linkage to the limit dextrin main chain, generating a debranched limit dextrin.</text>
</comment>
<comment type="catalytic activity">
    <reaction evidence="1">
        <text>Hydrolysis of (1-&gt;6)-alpha-D-glucosidic linkages to branches with degrees of polymerization of three or four glucose residues in limit dextrin.</text>
        <dbReference type="EC" id="3.2.1.196"/>
    </reaction>
</comment>
<comment type="pathway">
    <text evidence="1">Glycan degradation; glycogen degradation.</text>
</comment>
<comment type="similarity">
    <text evidence="1">Belongs to the glycosyl hydrolase 13 family.</text>
</comment>
<gene>
    <name evidence="1" type="primary">glgX</name>
    <name type="ordered locus">SeSA_A3727</name>
</gene>